<organism>
    <name type="scientific">Homo sapiens</name>
    <name type="common">Human</name>
    <dbReference type="NCBI Taxonomy" id="9606"/>
    <lineage>
        <taxon>Eukaryota</taxon>
        <taxon>Metazoa</taxon>
        <taxon>Chordata</taxon>
        <taxon>Craniata</taxon>
        <taxon>Vertebrata</taxon>
        <taxon>Euteleostomi</taxon>
        <taxon>Mammalia</taxon>
        <taxon>Eutheria</taxon>
        <taxon>Euarchontoglires</taxon>
        <taxon>Primates</taxon>
        <taxon>Haplorrhini</taxon>
        <taxon>Catarrhini</taxon>
        <taxon>Hominidae</taxon>
        <taxon>Homo</taxon>
    </lineage>
</organism>
<proteinExistence type="evidence at protein level"/>
<comment type="function">
    <text evidence="10">Phosphorylates specifically ribosomal protein S6 (PubMed:29750193). Seems to act downstream of mTOR signaling in response to growth factors and nutrients to promote cell proliferation, cell growth and cell cycle progression in an alternative pathway regulated by MEAK7 (PubMed:29750193).</text>
</comment>
<comment type="catalytic activity">
    <reaction>
        <text>L-seryl-[protein] + ATP = O-phospho-L-seryl-[protein] + ADP + H(+)</text>
        <dbReference type="Rhea" id="RHEA:17989"/>
        <dbReference type="Rhea" id="RHEA-COMP:9863"/>
        <dbReference type="Rhea" id="RHEA-COMP:11604"/>
        <dbReference type="ChEBI" id="CHEBI:15378"/>
        <dbReference type="ChEBI" id="CHEBI:29999"/>
        <dbReference type="ChEBI" id="CHEBI:30616"/>
        <dbReference type="ChEBI" id="CHEBI:83421"/>
        <dbReference type="ChEBI" id="CHEBI:456216"/>
        <dbReference type="EC" id="2.7.11.1"/>
    </reaction>
</comment>
<comment type="catalytic activity">
    <reaction>
        <text>L-threonyl-[protein] + ATP = O-phospho-L-threonyl-[protein] + ADP + H(+)</text>
        <dbReference type="Rhea" id="RHEA:46608"/>
        <dbReference type="Rhea" id="RHEA-COMP:11060"/>
        <dbReference type="Rhea" id="RHEA-COMP:11605"/>
        <dbReference type="ChEBI" id="CHEBI:15378"/>
        <dbReference type="ChEBI" id="CHEBI:30013"/>
        <dbReference type="ChEBI" id="CHEBI:30616"/>
        <dbReference type="ChEBI" id="CHEBI:61977"/>
        <dbReference type="ChEBI" id="CHEBI:456216"/>
        <dbReference type="EC" id="2.7.11.1"/>
    </reaction>
</comment>
<comment type="subcellular location">
    <subcellularLocation>
        <location>Cytoplasm</location>
    </subcellularLocation>
    <subcellularLocation>
        <location>Nucleus</location>
    </subcellularLocation>
</comment>
<comment type="alternative products">
    <event type="alternative splicing"/>
    <isoform>
        <id>Q9UBS0-1</id>
        <name>1</name>
        <sequence type="displayed"/>
    </isoform>
    <isoform>
        <id>Q9UBS0-2</id>
        <name>2</name>
        <sequence type="described" ref="VSP_056441 VSP_056442"/>
    </isoform>
</comment>
<comment type="PTM">
    <text evidence="6 7">Phosphorylated and activated by MTOR. Phosphorylation by PKC within the NLS in response to mitogenic stimuli causes cytoplasmic retention.</text>
</comment>
<comment type="similarity">
    <text evidence="14">Belongs to the protein kinase superfamily. AGC Ser/Thr protein kinase family. S6 kinase subfamily.</text>
</comment>
<comment type="sequence caution" evidence="14">
    <conflict type="erroneous initiation">
        <sequence resource="EMBL-CDS" id="BAA34402"/>
    </conflict>
    <text>Extended N-terminus.</text>
</comment>
<accession>Q9UBS0</accession>
<accession>B2RMZ9</accession>
<accession>B4DML8</accession>
<accession>O94809</accession>
<accession>Q9UEC1</accession>
<evidence type="ECO:0000255" key="1">
    <source>
        <dbReference type="PROSITE-ProRule" id="PRU00159"/>
    </source>
</evidence>
<evidence type="ECO:0000255" key="2">
    <source>
        <dbReference type="PROSITE-ProRule" id="PRU00618"/>
    </source>
</evidence>
<evidence type="ECO:0000255" key="3">
    <source>
        <dbReference type="PROSITE-ProRule" id="PRU10027"/>
    </source>
</evidence>
<evidence type="ECO:0000256" key="4">
    <source>
        <dbReference type="SAM" id="MobiDB-lite"/>
    </source>
</evidence>
<evidence type="ECO:0000269" key="5">
    <source>
    </source>
</evidence>
<evidence type="ECO:0000269" key="6">
    <source>
    </source>
</evidence>
<evidence type="ECO:0000269" key="7">
    <source>
    </source>
</evidence>
<evidence type="ECO:0000269" key="8">
    <source>
    </source>
</evidence>
<evidence type="ECO:0000269" key="9">
    <source>
    </source>
</evidence>
<evidence type="ECO:0000269" key="10">
    <source>
    </source>
</evidence>
<evidence type="ECO:0000269" key="11">
    <source>
    </source>
</evidence>
<evidence type="ECO:0000269" key="12">
    <source>
    </source>
</evidence>
<evidence type="ECO:0000303" key="13">
    <source>
    </source>
</evidence>
<evidence type="ECO:0000305" key="14"/>
<evidence type="ECO:0007744" key="15">
    <source>
    </source>
</evidence>
<evidence type="ECO:0007744" key="16">
    <source>
    </source>
</evidence>
<keyword id="KW-0025">Alternative splicing</keyword>
<keyword id="KW-0067">ATP-binding</keyword>
<keyword id="KW-0963">Cytoplasm</keyword>
<keyword id="KW-0418">Kinase</keyword>
<keyword id="KW-0547">Nucleotide-binding</keyword>
<keyword id="KW-0539">Nucleus</keyword>
<keyword id="KW-0597">Phosphoprotein</keyword>
<keyword id="KW-1267">Proteomics identification</keyword>
<keyword id="KW-1185">Reference proteome</keyword>
<keyword id="KW-0723">Serine/threonine-protein kinase</keyword>
<keyword id="KW-0808">Transferase</keyword>
<reference key="1">
    <citation type="journal article" date="1998" name="J. Biol. Chem.">
        <title>Molecular cloning and characterization of a novel p70 S6 kinase, p70 S6 kinase beta containing a proline-rich region.</title>
        <authorList>
            <person name="Gout I."/>
            <person name="Minami T."/>
            <person name="Hara K."/>
            <person name="Tsujishita Y."/>
            <person name="Filonenko V."/>
            <person name="Waterfield M.D."/>
            <person name="Yonezawa K."/>
        </authorList>
    </citation>
    <scope>NUCLEOTIDE SEQUENCE [MRNA] (ISOFORM 1)</scope>
    <scope>VARIANT VAL-420</scope>
</reference>
<reference key="2">
    <citation type="journal article" date="1998" name="Biochem. Biophys. Res. Commun.">
        <title>Cloning and characterization of p70 S6Kbeta defines a novel family of p70 S6 kinases.</title>
        <authorList>
            <person name="Saitoh M."/>
            <person name="ten Dijke P."/>
            <person name="Miyazono K."/>
            <person name="Ichijo H."/>
        </authorList>
    </citation>
    <scope>NUCLEOTIDE SEQUENCE [MRNA] (ISOFORM 1)</scope>
    <scope>VARIANT VAL-420</scope>
</reference>
<reference key="3">
    <citation type="journal article" date="1999" name="Oncogene">
        <title>Characterization of S6K2, a novel kinase homologous to S6K1.</title>
        <authorList>
            <person name="Lee-Fruman K.K."/>
            <person name="Kuo C.J."/>
            <person name="Lippincott J."/>
            <person name="Terada N."/>
            <person name="Blenis J."/>
        </authorList>
    </citation>
    <scope>NUCLEOTIDE SEQUENCE [MRNA] (ISOFORM 1)</scope>
    <scope>VARIANT VAL-420</scope>
</reference>
<reference key="4">
    <citation type="submission" date="1998-10" db="EMBL/GenBank/DDBJ databases">
        <title>Cloning and characterization of a novel S6 kinase-related kinase, SRK.</title>
        <authorList>
            <person name="Koh H.J."/>
            <person name="Lee B.N."/>
            <person name="Choi H.S."/>
            <person name="Chung J."/>
        </authorList>
    </citation>
    <scope>NUCLEOTIDE SEQUENCE [MRNA] (ISOFORM 1)</scope>
</reference>
<reference key="5">
    <citation type="journal article" date="2004" name="Nat. Genet.">
        <title>Complete sequencing and characterization of 21,243 full-length human cDNAs.</title>
        <authorList>
            <person name="Ota T."/>
            <person name="Suzuki Y."/>
            <person name="Nishikawa T."/>
            <person name="Otsuki T."/>
            <person name="Sugiyama T."/>
            <person name="Irie R."/>
            <person name="Wakamatsu A."/>
            <person name="Hayashi K."/>
            <person name="Sato H."/>
            <person name="Nagai K."/>
            <person name="Kimura K."/>
            <person name="Makita H."/>
            <person name="Sekine M."/>
            <person name="Obayashi M."/>
            <person name="Nishi T."/>
            <person name="Shibahara T."/>
            <person name="Tanaka T."/>
            <person name="Ishii S."/>
            <person name="Yamamoto J."/>
            <person name="Saito K."/>
            <person name="Kawai Y."/>
            <person name="Isono Y."/>
            <person name="Nakamura Y."/>
            <person name="Nagahari K."/>
            <person name="Murakami K."/>
            <person name="Yasuda T."/>
            <person name="Iwayanagi T."/>
            <person name="Wagatsuma M."/>
            <person name="Shiratori A."/>
            <person name="Sudo H."/>
            <person name="Hosoiri T."/>
            <person name="Kaku Y."/>
            <person name="Kodaira H."/>
            <person name="Kondo H."/>
            <person name="Sugawara M."/>
            <person name="Takahashi M."/>
            <person name="Kanda K."/>
            <person name="Yokoi T."/>
            <person name="Furuya T."/>
            <person name="Kikkawa E."/>
            <person name="Omura Y."/>
            <person name="Abe K."/>
            <person name="Kamihara K."/>
            <person name="Katsuta N."/>
            <person name="Sato K."/>
            <person name="Tanikawa M."/>
            <person name="Yamazaki M."/>
            <person name="Ninomiya K."/>
            <person name="Ishibashi T."/>
            <person name="Yamashita H."/>
            <person name="Murakawa K."/>
            <person name="Fujimori K."/>
            <person name="Tanai H."/>
            <person name="Kimata M."/>
            <person name="Watanabe M."/>
            <person name="Hiraoka S."/>
            <person name="Chiba Y."/>
            <person name="Ishida S."/>
            <person name="Ono Y."/>
            <person name="Takiguchi S."/>
            <person name="Watanabe S."/>
            <person name="Yosida M."/>
            <person name="Hotuta T."/>
            <person name="Kusano J."/>
            <person name="Kanehori K."/>
            <person name="Takahashi-Fujii A."/>
            <person name="Hara H."/>
            <person name="Tanase T.-O."/>
            <person name="Nomura Y."/>
            <person name="Togiya S."/>
            <person name="Komai F."/>
            <person name="Hara R."/>
            <person name="Takeuchi K."/>
            <person name="Arita M."/>
            <person name="Imose N."/>
            <person name="Musashino K."/>
            <person name="Yuuki H."/>
            <person name="Oshima A."/>
            <person name="Sasaki N."/>
            <person name="Aotsuka S."/>
            <person name="Yoshikawa Y."/>
            <person name="Matsunawa H."/>
            <person name="Ichihara T."/>
            <person name="Shiohata N."/>
            <person name="Sano S."/>
            <person name="Moriya S."/>
            <person name="Momiyama H."/>
            <person name="Satoh N."/>
            <person name="Takami S."/>
            <person name="Terashima Y."/>
            <person name="Suzuki O."/>
            <person name="Nakagawa S."/>
            <person name="Senoh A."/>
            <person name="Mizoguchi H."/>
            <person name="Goto Y."/>
            <person name="Shimizu F."/>
            <person name="Wakebe H."/>
            <person name="Hishigaki H."/>
            <person name="Watanabe T."/>
            <person name="Sugiyama A."/>
            <person name="Takemoto M."/>
            <person name="Kawakami B."/>
            <person name="Yamazaki M."/>
            <person name="Watanabe K."/>
            <person name="Kumagai A."/>
            <person name="Itakura S."/>
            <person name="Fukuzumi Y."/>
            <person name="Fujimori Y."/>
            <person name="Komiyama M."/>
            <person name="Tashiro H."/>
            <person name="Tanigami A."/>
            <person name="Fujiwara T."/>
            <person name="Ono T."/>
            <person name="Yamada K."/>
            <person name="Fujii Y."/>
            <person name="Ozaki K."/>
            <person name="Hirao M."/>
            <person name="Ohmori Y."/>
            <person name="Kawabata A."/>
            <person name="Hikiji T."/>
            <person name="Kobatake N."/>
            <person name="Inagaki H."/>
            <person name="Ikema Y."/>
            <person name="Okamoto S."/>
            <person name="Okitani R."/>
            <person name="Kawakami T."/>
            <person name="Noguchi S."/>
            <person name="Itoh T."/>
            <person name="Shigeta K."/>
            <person name="Senba T."/>
            <person name="Matsumura K."/>
            <person name="Nakajima Y."/>
            <person name="Mizuno T."/>
            <person name="Morinaga M."/>
            <person name="Sasaki M."/>
            <person name="Togashi T."/>
            <person name="Oyama M."/>
            <person name="Hata H."/>
            <person name="Watanabe M."/>
            <person name="Komatsu T."/>
            <person name="Mizushima-Sugano J."/>
            <person name="Satoh T."/>
            <person name="Shirai Y."/>
            <person name="Takahashi Y."/>
            <person name="Nakagawa K."/>
            <person name="Okumura K."/>
            <person name="Nagase T."/>
            <person name="Nomura N."/>
            <person name="Kikuchi H."/>
            <person name="Masuho Y."/>
            <person name="Yamashita R."/>
            <person name="Nakai K."/>
            <person name="Yada T."/>
            <person name="Nakamura Y."/>
            <person name="Ohara O."/>
            <person name="Isogai T."/>
            <person name="Sugano S."/>
        </authorList>
    </citation>
    <scope>NUCLEOTIDE SEQUENCE [LARGE SCALE MRNA] (ISOFORM 2)</scope>
    <source>
        <tissue>Brain</tissue>
    </source>
</reference>
<reference key="6">
    <citation type="journal article" date="2006" name="Nature">
        <title>Human chromosome 11 DNA sequence and analysis including novel gene identification.</title>
        <authorList>
            <person name="Taylor T.D."/>
            <person name="Noguchi H."/>
            <person name="Totoki Y."/>
            <person name="Toyoda A."/>
            <person name="Kuroki Y."/>
            <person name="Dewar K."/>
            <person name="Lloyd C."/>
            <person name="Itoh T."/>
            <person name="Takeda T."/>
            <person name="Kim D.-W."/>
            <person name="She X."/>
            <person name="Barlow K.F."/>
            <person name="Bloom T."/>
            <person name="Bruford E."/>
            <person name="Chang J.L."/>
            <person name="Cuomo C.A."/>
            <person name="Eichler E."/>
            <person name="FitzGerald M.G."/>
            <person name="Jaffe D.B."/>
            <person name="LaButti K."/>
            <person name="Nicol R."/>
            <person name="Park H.-S."/>
            <person name="Seaman C."/>
            <person name="Sougnez C."/>
            <person name="Yang X."/>
            <person name="Zimmer A.R."/>
            <person name="Zody M.C."/>
            <person name="Birren B.W."/>
            <person name="Nusbaum C."/>
            <person name="Fujiyama A."/>
            <person name="Hattori M."/>
            <person name="Rogers J."/>
            <person name="Lander E.S."/>
            <person name="Sakaki Y."/>
        </authorList>
    </citation>
    <scope>NUCLEOTIDE SEQUENCE [LARGE SCALE GENOMIC DNA]</scope>
</reference>
<reference key="7">
    <citation type="submission" date="2005-07" db="EMBL/GenBank/DDBJ databases">
        <authorList>
            <person name="Mural R.J."/>
            <person name="Istrail S."/>
            <person name="Sutton G.G."/>
            <person name="Florea L."/>
            <person name="Halpern A.L."/>
            <person name="Mobarry C.M."/>
            <person name="Lippert R."/>
            <person name="Walenz B."/>
            <person name="Shatkay H."/>
            <person name="Dew I."/>
            <person name="Miller J.R."/>
            <person name="Flanigan M.J."/>
            <person name="Edwards N.J."/>
            <person name="Bolanos R."/>
            <person name="Fasulo D."/>
            <person name="Halldorsson B.V."/>
            <person name="Hannenhalli S."/>
            <person name="Turner R."/>
            <person name="Yooseph S."/>
            <person name="Lu F."/>
            <person name="Nusskern D.R."/>
            <person name="Shue B.C."/>
            <person name="Zheng X.H."/>
            <person name="Zhong F."/>
            <person name="Delcher A.L."/>
            <person name="Huson D.H."/>
            <person name="Kravitz S.A."/>
            <person name="Mouchard L."/>
            <person name="Reinert K."/>
            <person name="Remington K.A."/>
            <person name="Clark A.G."/>
            <person name="Waterman M.S."/>
            <person name="Eichler E.E."/>
            <person name="Adams M.D."/>
            <person name="Hunkapiller M.W."/>
            <person name="Myers E.W."/>
            <person name="Venter J.C."/>
        </authorList>
    </citation>
    <scope>NUCLEOTIDE SEQUENCE [LARGE SCALE GENOMIC DNA]</scope>
</reference>
<reference key="8">
    <citation type="journal article" date="2004" name="Genome Res.">
        <title>The status, quality, and expansion of the NIH full-length cDNA project: the Mammalian Gene Collection (MGC).</title>
        <authorList>
            <consortium name="The MGC Project Team"/>
        </authorList>
    </citation>
    <scope>NUCLEOTIDE SEQUENCE [LARGE SCALE MRNA] (ISOFORM 1)</scope>
    <scope>VARIANT VAL-420</scope>
    <source>
        <tissue>Brain</tissue>
    </source>
</reference>
<reference key="9">
    <citation type="journal article" date="2002" name="J. Biol. Chem.">
        <title>Regulation of ribosomal S6 kinase 2 by mammalian target of rapamycin.</title>
        <authorList>
            <person name="Park I.H."/>
            <person name="Bachmann R."/>
            <person name="Shirazi H."/>
            <person name="Chen J."/>
        </authorList>
    </citation>
    <scope>PHOSPHORYLATION BY MTOR</scope>
    <scope>SUBCELLULAR LOCATION</scope>
</reference>
<reference key="10">
    <citation type="journal article" date="2003" name="Mol. Cell. Biol.">
        <title>Protein kinase C phosphorylates ribosomal protein S6 kinase betaII and regulates its subcellular localization.</title>
        <authorList>
            <person name="Valovka T."/>
            <person name="Verdier F."/>
            <person name="Cramer R."/>
            <person name="Zhyvoloup A."/>
            <person name="Fenton T."/>
            <person name="Rebholz H."/>
            <person name="Wang M.L."/>
            <person name="Gzhegotsky M."/>
            <person name="Lutsyk A."/>
            <person name="Matsuka G."/>
            <person name="Filonenko V."/>
            <person name="Wang L."/>
            <person name="Proud C.G."/>
            <person name="Parker P.J."/>
            <person name="Gout I.T."/>
        </authorList>
    </citation>
    <scope>PHOSPHORYLATION AT SER-473</scope>
    <scope>SUBCELLULAR LOCATION</scope>
    <scope>NUCLEAR LOCALIZATION SIGNAL</scope>
</reference>
<reference key="11">
    <citation type="journal article" date="2006" name="Cell">
        <title>Global, in vivo, and site-specific phosphorylation dynamics in signaling networks.</title>
        <authorList>
            <person name="Olsen J.V."/>
            <person name="Blagoev B."/>
            <person name="Gnad F."/>
            <person name="Macek B."/>
            <person name="Kumar C."/>
            <person name="Mortensen P."/>
            <person name="Mann M."/>
        </authorList>
    </citation>
    <scope>PHOSPHORYLATION [LARGE SCALE ANALYSIS] AT SER-15</scope>
    <scope>IDENTIFICATION BY MASS SPECTROMETRY [LARGE SCALE ANALYSIS]</scope>
    <source>
        <tissue>Cervix carcinoma</tissue>
    </source>
</reference>
<reference key="12">
    <citation type="journal article" date="2009" name="Sci. Signal.">
        <title>Quantitative phosphoproteomic analysis of T cell receptor signaling reveals system-wide modulation of protein-protein interactions.</title>
        <authorList>
            <person name="Mayya V."/>
            <person name="Lundgren D.H."/>
            <person name="Hwang S.-I."/>
            <person name="Rezaul K."/>
            <person name="Wu L."/>
            <person name="Eng J.K."/>
            <person name="Rodionov V."/>
            <person name="Han D.K."/>
        </authorList>
    </citation>
    <scope>IDENTIFICATION BY MASS SPECTROMETRY [LARGE SCALE ANALYSIS]</scope>
    <source>
        <tissue>Leukemic T-cell</tissue>
    </source>
</reference>
<reference key="13">
    <citation type="journal article" date="2011" name="BMC Syst. Biol.">
        <title>Initial characterization of the human central proteome.</title>
        <authorList>
            <person name="Burkard T.R."/>
            <person name="Planyavsky M."/>
            <person name="Kaupe I."/>
            <person name="Breitwieser F.P."/>
            <person name="Buerckstuemmer T."/>
            <person name="Bennett K.L."/>
            <person name="Superti-Furga G."/>
            <person name="Colinge J."/>
        </authorList>
    </citation>
    <scope>IDENTIFICATION BY MASS SPECTROMETRY [LARGE SCALE ANALYSIS]</scope>
</reference>
<reference key="14">
    <citation type="journal article" date="2013" name="J. Proteome Res.">
        <title>Toward a comprehensive characterization of a human cancer cell phosphoproteome.</title>
        <authorList>
            <person name="Zhou H."/>
            <person name="Di Palma S."/>
            <person name="Preisinger C."/>
            <person name="Peng M."/>
            <person name="Polat A.N."/>
            <person name="Heck A.J."/>
            <person name="Mohammed S."/>
        </authorList>
    </citation>
    <scope>PHOSPHORYLATION [LARGE SCALE ANALYSIS] AT SER-417 AND SER-423</scope>
    <scope>VARIANT [LARGE SCALE ANALYSIS] VAL-420</scope>
    <scope>IDENTIFICATION BY MASS SPECTROMETRY [LARGE SCALE ANALYSIS]</scope>
    <source>
        <tissue>Erythroleukemia</tissue>
    </source>
</reference>
<reference key="15">
    <citation type="journal article" date="2007" name="Nature">
        <title>Patterns of somatic mutation in human cancer genomes.</title>
        <authorList>
            <person name="Greenman C."/>
            <person name="Stephens P."/>
            <person name="Smith R."/>
            <person name="Dalgliesh G.L."/>
            <person name="Hunter C."/>
            <person name="Bignell G."/>
            <person name="Davies H."/>
            <person name="Teague J."/>
            <person name="Butler A."/>
            <person name="Stevens C."/>
            <person name="Edkins S."/>
            <person name="O'Meara S."/>
            <person name="Vastrik I."/>
            <person name="Schmidt E.E."/>
            <person name="Avis T."/>
            <person name="Barthorpe S."/>
            <person name="Bhamra G."/>
            <person name="Buck G."/>
            <person name="Choudhury B."/>
            <person name="Clements J."/>
            <person name="Cole J."/>
            <person name="Dicks E."/>
            <person name="Forbes S."/>
            <person name="Gray K."/>
            <person name="Halliday K."/>
            <person name="Harrison R."/>
            <person name="Hills K."/>
            <person name="Hinton J."/>
            <person name="Jenkinson A."/>
            <person name="Jones D."/>
            <person name="Menzies A."/>
            <person name="Mironenko T."/>
            <person name="Perry J."/>
            <person name="Raine K."/>
            <person name="Richardson D."/>
            <person name="Shepherd R."/>
            <person name="Small A."/>
            <person name="Tofts C."/>
            <person name="Varian J."/>
            <person name="Webb T."/>
            <person name="West S."/>
            <person name="Widaa S."/>
            <person name="Yates A."/>
            <person name="Cahill D.P."/>
            <person name="Louis D.N."/>
            <person name="Goldstraw P."/>
            <person name="Nicholson A.G."/>
            <person name="Brasseur F."/>
            <person name="Looijenga L."/>
            <person name="Weber B.L."/>
            <person name="Chiew Y.-E."/>
            <person name="DeFazio A."/>
            <person name="Greaves M.F."/>
            <person name="Green A.R."/>
            <person name="Campbell P."/>
            <person name="Birney E."/>
            <person name="Easton D.F."/>
            <person name="Chenevix-Trench G."/>
            <person name="Tan M.-H."/>
            <person name="Khoo S.K."/>
            <person name="Teh B.T."/>
            <person name="Yuen S.T."/>
            <person name="Leung S.Y."/>
            <person name="Wooster R."/>
            <person name="Futreal P.A."/>
            <person name="Stratton M.R."/>
        </authorList>
    </citation>
    <scope>VARIANTS [LARGE SCALE ANALYSIS] LEU-267; MET-368; VAL-420 AND MET-443</scope>
</reference>
<reference key="16">
    <citation type="journal article" date="2018" name="Sci. Adv.">
        <title>Mammalian EAK-7 activates alternative mTOR signaling to regulate cell proliferation and migration.</title>
        <authorList>
            <person name="Nguyen J.T."/>
            <person name="Ray C."/>
            <person name="Fox A.L."/>
            <person name="Mendonca D.B."/>
            <person name="Kim J.K."/>
            <person name="Krebsbach P.H."/>
        </authorList>
    </citation>
    <scope>FUNCTION</scope>
</reference>
<sequence length="482" mass="53455">MAAVFDLDLETEEGSEGEGEPELSPADACPLAELRAAGLEPVGHYEEVELTETSVNVGPERIGPHCFELLRVLGKGGYGKVFQVRKVQGTNLGKIYAMKVLRKAKIVRNAKDTAHTRAERNILESVKHPFIVELAYAFQTGGKLYLILECLSGGELFTHLEREGIFLEDTACFYLAEITLALGHLHSQGIIYRDLKPENIMLSSQGHIKLTDFGLCKESIHEGAVTHTFCGTIEYMAPEILVRSGHNRAVDWWSLGALMYDMLTGSPPFTAENRKKTMDKIIRGKLALPPYLTPDARDLVKKFLKRNPSQRIGGGPGDAADVQRHPFFRHMNWDDLLAWRVDPPFRPCLQSEEDVSQFDTRFTRQTPVDSPDDTALSESANQAFLGFTYVAPSVLDSIKEGFSFQPKLRSPRRLNSSPRAPVSPLKFSPFEGFRPSPSLPEPTELPLPPLLPPPPPSTTAPLPIRPPSGTKKSKRGRGRPGR</sequence>
<dbReference type="EC" id="2.7.11.1"/>
<dbReference type="EMBL" id="AB016869">
    <property type="protein sequence ID" value="BAA34402.1"/>
    <property type="status" value="ALT_INIT"/>
    <property type="molecule type" value="mRNA"/>
</dbReference>
<dbReference type="EMBL" id="AB019245">
    <property type="protein sequence ID" value="BAA37145.1"/>
    <property type="molecule type" value="mRNA"/>
</dbReference>
<dbReference type="EMBL" id="AF076931">
    <property type="protein sequence ID" value="AAD46063.1"/>
    <property type="molecule type" value="mRNA"/>
</dbReference>
<dbReference type="EMBL" id="AF099739">
    <property type="protein sequence ID" value="AAD20990.1"/>
    <property type="molecule type" value="mRNA"/>
</dbReference>
<dbReference type="EMBL" id="AK297527">
    <property type="protein sequence ID" value="BAG59930.1"/>
    <property type="molecule type" value="mRNA"/>
</dbReference>
<dbReference type="EMBL" id="AP003419">
    <property type="status" value="NOT_ANNOTATED_CDS"/>
    <property type="molecule type" value="Genomic_DNA"/>
</dbReference>
<dbReference type="EMBL" id="CH471076">
    <property type="protein sequence ID" value="EAW74621.1"/>
    <property type="molecule type" value="Genomic_DNA"/>
</dbReference>
<dbReference type="EMBL" id="BC000094">
    <property type="protein sequence ID" value="AAH00094.3"/>
    <property type="molecule type" value="mRNA"/>
</dbReference>
<dbReference type="EMBL" id="BC136564">
    <property type="protein sequence ID" value="AAI36565.1"/>
    <property type="molecule type" value="mRNA"/>
</dbReference>
<dbReference type="CCDS" id="CCDS41677.1">
    <molecule id="Q9UBS0-1"/>
</dbReference>
<dbReference type="PIR" id="JE0377">
    <property type="entry name" value="JE0377"/>
</dbReference>
<dbReference type="RefSeq" id="NP_003943.2">
    <molecule id="Q9UBS0-1"/>
    <property type="nucleotide sequence ID" value="NM_003952.3"/>
</dbReference>
<dbReference type="SMR" id="Q9UBS0"/>
<dbReference type="BioGRID" id="112113">
    <property type="interactions" value="258"/>
</dbReference>
<dbReference type="ELM" id="Q9UBS0"/>
<dbReference type="FunCoup" id="Q9UBS0">
    <property type="interactions" value="3038"/>
</dbReference>
<dbReference type="IntAct" id="Q9UBS0">
    <property type="interactions" value="32"/>
</dbReference>
<dbReference type="MINT" id="Q9UBS0"/>
<dbReference type="STRING" id="9606.ENSP00000308413"/>
<dbReference type="BindingDB" id="Q9UBS0"/>
<dbReference type="ChEMBL" id="CHEMBL3111"/>
<dbReference type="iPTMnet" id="Q9UBS0"/>
<dbReference type="PhosphoSitePlus" id="Q9UBS0"/>
<dbReference type="BioMuta" id="RPS6KB2"/>
<dbReference type="DMDM" id="296434560"/>
<dbReference type="CPTAC" id="CPTAC-2967"/>
<dbReference type="CPTAC" id="CPTAC-2968"/>
<dbReference type="jPOST" id="Q9UBS0"/>
<dbReference type="MassIVE" id="Q9UBS0"/>
<dbReference type="PaxDb" id="9606-ENSP00000308413"/>
<dbReference type="PeptideAtlas" id="Q9UBS0"/>
<dbReference type="ProteomicsDB" id="4623"/>
<dbReference type="ProteomicsDB" id="84044">
    <molecule id="Q9UBS0-1"/>
</dbReference>
<dbReference type="Pumba" id="Q9UBS0"/>
<dbReference type="Antibodypedia" id="1546">
    <property type="antibodies" value="736 antibodies from 40 providers"/>
</dbReference>
<dbReference type="DNASU" id="6199"/>
<dbReference type="Ensembl" id="ENST00000312629.10">
    <molecule id="Q9UBS0-1"/>
    <property type="protein sequence ID" value="ENSP00000308413.5"/>
    <property type="gene ID" value="ENSG00000175634.15"/>
</dbReference>
<dbReference type="Ensembl" id="ENST00000528964.5">
    <molecule id="Q9UBS0-2"/>
    <property type="protein sequence ID" value="ENSP00000432847.1"/>
    <property type="gene ID" value="ENSG00000175634.15"/>
</dbReference>
<dbReference type="GeneID" id="6199"/>
<dbReference type="KEGG" id="hsa:6199"/>
<dbReference type="MANE-Select" id="ENST00000312629.10">
    <property type="protein sequence ID" value="ENSP00000308413.5"/>
    <property type="RefSeq nucleotide sequence ID" value="NM_003952.3"/>
    <property type="RefSeq protein sequence ID" value="NP_003943.2"/>
</dbReference>
<dbReference type="UCSC" id="uc001old.4">
    <molecule id="Q9UBS0-1"/>
    <property type="organism name" value="human"/>
</dbReference>
<dbReference type="AGR" id="HGNC:10437"/>
<dbReference type="CTD" id="6199"/>
<dbReference type="DisGeNET" id="6199"/>
<dbReference type="GeneCards" id="RPS6KB2"/>
<dbReference type="HGNC" id="HGNC:10437">
    <property type="gene designation" value="RPS6KB2"/>
</dbReference>
<dbReference type="HPA" id="ENSG00000175634">
    <property type="expression patterns" value="Low tissue specificity"/>
</dbReference>
<dbReference type="MIM" id="608939">
    <property type="type" value="gene"/>
</dbReference>
<dbReference type="neXtProt" id="NX_Q9UBS0"/>
<dbReference type="OpenTargets" id="ENSG00000175634"/>
<dbReference type="PharmGKB" id="PA34852"/>
<dbReference type="VEuPathDB" id="HostDB:ENSG00000175634"/>
<dbReference type="eggNOG" id="KOG0598">
    <property type="taxonomic scope" value="Eukaryota"/>
</dbReference>
<dbReference type="GeneTree" id="ENSGT00940000155062"/>
<dbReference type="HOGENOM" id="CLU_000288_63_5_1"/>
<dbReference type="InParanoid" id="Q9UBS0"/>
<dbReference type="OMA" id="AGTHCIA"/>
<dbReference type="OrthoDB" id="63267at2759"/>
<dbReference type="PAN-GO" id="Q9UBS0">
    <property type="GO annotations" value="5 GO annotations based on evolutionary models"/>
</dbReference>
<dbReference type="PhylomeDB" id="Q9UBS0"/>
<dbReference type="TreeFam" id="TF313438"/>
<dbReference type="BRENDA" id="2.7.11.1">
    <property type="organism ID" value="2681"/>
</dbReference>
<dbReference type="PathwayCommons" id="Q9UBS0"/>
<dbReference type="Reactome" id="R-HSA-198693">
    <property type="pathway name" value="AKT phosphorylates targets in the nucleus"/>
</dbReference>
<dbReference type="Reactome" id="R-HSA-5674400">
    <property type="pathway name" value="Constitutive Signaling by AKT1 E17K in Cancer"/>
</dbReference>
<dbReference type="SignaLink" id="Q9UBS0"/>
<dbReference type="SIGNOR" id="Q9UBS0"/>
<dbReference type="BioGRID-ORCS" id="6199">
    <property type="hits" value="14 hits in 1191 CRISPR screens"/>
</dbReference>
<dbReference type="ChiTaRS" id="RPS6KB2">
    <property type="organism name" value="human"/>
</dbReference>
<dbReference type="GeneWiki" id="RPS6KB2"/>
<dbReference type="GenomeRNAi" id="6199"/>
<dbReference type="Pharos" id="Q9UBS0">
    <property type="development level" value="Tchem"/>
</dbReference>
<dbReference type="PRO" id="PR:Q9UBS0"/>
<dbReference type="Proteomes" id="UP000005640">
    <property type="component" value="Chromosome 11"/>
</dbReference>
<dbReference type="RNAct" id="Q9UBS0">
    <property type="molecule type" value="protein"/>
</dbReference>
<dbReference type="Bgee" id="ENSG00000175634">
    <property type="expression patterns" value="Expressed in lower esophagus mucosa and 142 other cell types or tissues"/>
</dbReference>
<dbReference type="ExpressionAtlas" id="Q9UBS0">
    <property type="expression patterns" value="baseline and differential"/>
</dbReference>
<dbReference type="GO" id="GO:0005737">
    <property type="term" value="C:cytoplasm"/>
    <property type="evidence" value="ECO:0000318"/>
    <property type="project" value="GO_Central"/>
</dbReference>
<dbReference type="GO" id="GO:0005654">
    <property type="term" value="C:nucleoplasm"/>
    <property type="evidence" value="ECO:0000318"/>
    <property type="project" value="GO_Central"/>
</dbReference>
<dbReference type="GO" id="GO:0005524">
    <property type="term" value="F:ATP binding"/>
    <property type="evidence" value="ECO:0007669"/>
    <property type="project" value="UniProtKB-KW"/>
</dbReference>
<dbReference type="GO" id="GO:0042277">
    <property type="term" value="F:peptide binding"/>
    <property type="evidence" value="ECO:0007669"/>
    <property type="project" value="Ensembl"/>
</dbReference>
<dbReference type="GO" id="GO:0004672">
    <property type="term" value="F:protein kinase activity"/>
    <property type="evidence" value="ECO:0000304"/>
    <property type="project" value="ProtInc"/>
</dbReference>
<dbReference type="GO" id="GO:0106310">
    <property type="term" value="F:protein serine kinase activity"/>
    <property type="evidence" value="ECO:0007669"/>
    <property type="project" value="RHEA"/>
</dbReference>
<dbReference type="GO" id="GO:0004674">
    <property type="term" value="F:protein serine/threonine kinase activity"/>
    <property type="evidence" value="ECO:0000314"/>
    <property type="project" value="UniProt"/>
</dbReference>
<dbReference type="GO" id="GO:0004711">
    <property type="term" value="F:ribosomal protein S6 kinase activity"/>
    <property type="evidence" value="ECO:0007669"/>
    <property type="project" value="Ensembl"/>
</dbReference>
<dbReference type="GO" id="GO:0046627">
    <property type="term" value="P:negative regulation of insulin receptor signaling pathway"/>
    <property type="evidence" value="ECO:0007669"/>
    <property type="project" value="Ensembl"/>
</dbReference>
<dbReference type="GO" id="GO:0045948">
    <property type="term" value="P:positive regulation of translational initiation"/>
    <property type="evidence" value="ECO:0000314"/>
    <property type="project" value="UniProt"/>
</dbReference>
<dbReference type="GO" id="GO:0007165">
    <property type="term" value="P:signal transduction"/>
    <property type="evidence" value="ECO:0000304"/>
    <property type="project" value="ProtInc"/>
</dbReference>
<dbReference type="GO" id="GO:0031929">
    <property type="term" value="P:TOR signaling"/>
    <property type="evidence" value="ECO:0000315"/>
    <property type="project" value="UniProtKB"/>
</dbReference>
<dbReference type="GO" id="GO:0038202">
    <property type="term" value="P:TORC1 signaling"/>
    <property type="evidence" value="ECO:0000318"/>
    <property type="project" value="GO_Central"/>
</dbReference>
<dbReference type="GO" id="GO:0006412">
    <property type="term" value="P:translation"/>
    <property type="evidence" value="ECO:0000304"/>
    <property type="project" value="ProtInc"/>
</dbReference>
<dbReference type="CDD" id="cd05584">
    <property type="entry name" value="STKc_p70S6K"/>
    <property type="match status" value="1"/>
</dbReference>
<dbReference type="FunFam" id="3.30.200.20:FF:000587">
    <property type="entry name" value="Non-specific serine/threonine protein kinase"/>
    <property type="match status" value="1"/>
</dbReference>
<dbReference type="FunFam" id="3.30.200.20:FF:001128">
    <property type="entry name" value="Non-specific serine/threonine protein kinase"/>
    <property type="match status" value="1"/>
</dbReference>
<dbReference type="FunFam" id="1.10.510.10:FF:000092">
    <property type="entry name" value="Ribosomal protein S6 kinase"/>
    <property type="match status" value="1"/>
</dbReference>
<dbReference type="Gene3D" id="3.30.200.20">
    <property type="entry name" value="Phosphorylase Kinase, domain 1"/>
    <property type="match status" value="1"/>
</dbReference>
<dbReference type="Gene3D" id="1.10.510.10">
    <property type="entry name" value="Transferase(Phosphotransferase) domain 1"/>
    <property type="match status" value="1"/>
</dbReference>
<dbReference type="InterPro" id="IPR000961">
    <property type="entry name" value="AGC-kinase_C"/>
</dbReference>
<dbReference type="InterPro" id="IPR011009">
    <property type="entry name" value="Kinase-like_dom_sf"/>
</dbReference>
<dbReference type="InterPro" id="IPR017892">
    <property type="entry name" value="Pkinase_C"/>
</dbReference>
<dbReference type="InterPro" id="IPR000719">
    <property type="entry name" value="Prot_kinase_dom"/>
</dbReference>
<dbReference type="InterPro" id="IPR017441">
    <property type="entry name" value="Protein_kinase_ATP_BS"/>
</dbReference>
<dbReference type="InterPro" id="IPR016238">
    <property type="entry name" value="Ribosomal_S6_kinase"/>
</dbReference>
<dbReference type="InterPro" id="IPR008271">
    <property type="entry name" value="Ser/Thr_kinase_AS"/>
</dbReference>
<dbReference type="PANTHER" id="PTHR24351">
    <property type="entry name" value="RIBOSOMAL PROTEIN S6 KINASE"/>
    <property type="match status" value="1"/>
</dbReference>
<dbReference type="Pfam" id="PF00069">
    <property type="entry name" value="Pkinase"/>
    <property type="match status" value="1"/>
</dbReference>
<dbReference type="Pfam" id="PF00433">
    <property type="entry name" value="Pkinase_C"/>
    <property type="match status" value="1"/>
</dbReference>
<dbReference type="PIRSF" id="PIRSF000605">
    <property type="entry name" value="Ribsml_S6_kin_1"/>
    <property type="match status" value="1"/>
</dbReference>
<dbReference type="SMART" id="SM00133">
    <property type="entry name" value="S_TK_X"/>
    <property type="match status" value="1"/>
</dbReference>
<dbReference type="SMART" id="SM00220">
    <property type="entry name" value="S_TKc"/>
    <property type="match status" value="1"/>
</dbReference>
<dbReference type="SUPFAM" id="SSF56112">
    <property type="entry name" value="Protein kinase-like (PK-like)"/>
    <property type="match status" value="1"/>
</dbReference>
<dbReference type="PROSITE" id="PS51285">
    <property type="entry name" value="AGC_KINASE_CTER"/>
    <property type="match status" value="1"/>
</dbReference>
<dbReference type="PROSITE" id="PS00107">
    <property type="entry name" value="PROTEIN_KINASE_ATP"/>
    <property type="match status" value="1"/>
</dbReference>
<dbReference type="PROSITE" id="PS50011">
    <property type="entry name" value="PROTEIN_KINASE_DOM"/>
    <property type="match status" value="1"/>
</dbReference>
<dbReference type="PROSITE" id="PS00108">
    <property type="entry name" value="PROTEIN_KINASE_ST"/>
    <property type="match status" value="1"/>
</dbReference>
<protein>
    <recommendedName>
        <fullName>Ribosomal protein S6 kinase beta-2</fullName>
        <shortName>S6K-beta-2</shortName>
        <shortName>S6K2</shortName>
        <ecNumber>2.7.11.1</ecNumber>
    </recommendedName>
    <alternativeName>
        <fullName>70 kDa ribosomal protein S6 kinase 2</fullName>
        <shortName>P70S6K2</shortName>
        <shortName>p70-S6K 2</shortName>
    </alternativeName>
    <alternativeName>
        <fullName>S6 kinase-related kinase</fullName>
        <shortName>SRK</shortName>
    </alternativeName>
    <alternativeName>
        <fullName>Serine/threonine-protein kinase 14B</fullName>
    </alternativeName>
    <alternativeName>
        <fullName>p70 ribosomal S6 kinase beta</fullName>
        <shortName>S6K-beta</shortName>
        <shortName>p70 S6 kinase beta</shortName>
        <shortName>p70 S6K-beta</shortName>
        <shortName>p70 S6KB</shortName>
        <shortName>p70-beta</shortName>
    </alternativeName>
</protein>
<name>KS6B2_HUMAN</name>
<gene>
    <name type="primary">RPS6KB2</name>
    <name type="synonym">STK14B</name>
</gene>
<feature type="chain" id="PRO_0000086214" description="Ribosomal protein S6 kinase beta-2">
    <location>
        <begin position="1"/>
        <end position="482"/>
    </location>
</feature>
<feature type="domain" description="Protein kinase" evidence="1">
    <location>
        <begin position="67"/>
        <end position="328"/>
    </location>
</feature>
<feature type="domain" description="AGC-kinase C-terminal" evidence="2">
    <location>
        <begin position="329"/>
        <end position="399"/>
    </location>
</feature>
<feature type="region of interest" description="Disordered" evidence="4">
    <location>
        <begin position="1"/>
        <end position="26"/>
    </location>
</feature>
<feature type="region of interest" description="Disordered" evidence="4">
    <location>
        <begin position="407"/>
        <end position="482"/>
    </location>
</feature>
<feature type="short sequence motif" description="Nuclear localization signal" evidence="7">
    <location>
        <begin position="471"/>
        <end position="477"/>
    </location>
</feature>
<feature type="compositionally biased region" description="Acidic residues" evidence="4">
    <location>
        <begin position="7"/>
        <end position="21"/>
    </location>
</feature>
<feature type="compositionally biased region" description="Pro residues" evidence="4">
    <location>
        <begin position="437"/>
        <end position="466"/>
    </location>
</feature>
<feature type="compositionally biased region" description="Basic residues" evidence="4">
    <location>
        <begin position="471"/>
        <end position="482"/>
    </location>
</feature>
<feature type="active site" description="Proton acceptor" evidence="1 3">
    <location>
        <position position="194"/>
    </location>
</feature>
<feature type="binding site" evidence="1">
    <location>
        <begin position="73"/>
        <end position="81"/>
    </location>
    <ligand>
        <name>ATP</name>
        <dbReference type="ChEBI" id="CHEBI:30616"/>
    </ligand>
</feature>
<feature type="binding site" evidence="1">
    <location>
        <position position="99"/>
    </location>
    <ligand>
        <name>ATP</name>
        <dbReference type="ChEBI" id="CHEBI:30616"/>
    </ligand>
</feature>
<feature type="modified residue" description="Phosphoserine" evidence="15">
    <location>
        <position position="15"/>
    </location>
</feature>
<feature type="modified residue" description="Phosphoserine" evidence="16">
    <location>
        <position position="417"/>
    </location>
</feature>
<feature type="modified residue" description="Phosphoserine" evidence="16">
    <location>
        <position position="423"/>
    </location>
</feature>
<feature type="modified residue" description="Phosphoserine; by PKC" evidence="7">
    <location>
        <position position="473"/>
    </location>
</feature>
<feature type="splice variant" id="VSP_056441" description="In isoform 2." evidence="13">
    <original>GG</original>
    <variation>VD</variation>
    <location>
        <begin position="153"/>
        <end position="154"/>
    </location>
</feature>
<feature type="splice variant" id="VSP_056442" description="In isoform 2." evidence="13">
    <location>
        <begin position="155"/>
        <end position="482"/>
    </location>
</feature>
<feature type="sequence variant" id="VAR_040643" description="In dbSNP:rs55987642." evidence="9">
    <original>P</original>
    <variation>L</variation>
    <location>
        <position position="267"/>
    </location>
</feature>
<feature type="sequence variant" id="VAR_040644" description="In dbSNP:rs55642995." evidence="9">
    <original>V</original>
    <variation>M</variation>
    <location>
        <position position="368"/>
    </location>
</feature>
<feature type="sequence variant" id="VAR_040645" description="In dbSNP:rs13859." evidence="5 8 9 11 12 16">
    <original>A</original>
    <variation>V</variation>
    <location>
        <position position="420"/>
    </location>
</feature>
<feature type="sequence variant" id="VAR_040646" description="In an ovarian mucinous carcinoma sample; somatic mutation; dbSNP:rs374535834." evidence="9">
    <original>T</original>
    <variation>M</variation>
    <location>
        <position position="443"/>
    </location>
</feature>
<feature type="sequence conflict" description="In Ref. 2; BAA37145." evidence="14" ref="2">
    <location>
        <position position="90"/>
    </location>
</feature>
<feature type="sequence conflict" description="In Ref. 2; BAA37145." evidence="14" ref="2">
    <original>R</original>
    <variation>C</variation>
    <location>
        <position position="409"/>
    </location>
</feature>